<gene>
    <name type="primary">pgl</name>
    <name type="synonym">devB</name>
</gene>
<feature type="chain" id="PRO_0000090088" description="6-phosphogluconolactonase">
    <location>
        <begin position="1"/>
        <end position="232"/>
    </location>
</feature>
<proteinExistence type="inferred from homology"/>
<dbReference type="EC" id="3.1.1.31"/>
<dbReference type="EMBL" id="D88189">
    <property type="protein sequence ID" value="BAA13555.1"/>
    <property type="status" value="ALT_INIT"/>
    <property type="molecule type" value="Genomic_DNA"/>
</dbReference>
<dbReference type="RefSeq" id="WP_005568636.1">
    <property type="nucleotide sequence ID" value="NZ_JAJHPH010000017.1"/>
</dbReference>
<dbReference type="SMR" id="P70715"/>
<dbReference type="STRING" id="714.ACT75_04155"/>
<dbReference type="eggNOG" id="COG0363">
    <property type="taxonomic scope" value="Bacteria"/>
</dbReference>
<dbReference type="UniPathway" id="UPA00115">
    <property type="reaction ID" value="UER00409"/>
</dbReference>
<dbReference type="GO" id="GO:0017057">
    <property type="term" value="F:6-phosphogluconolactonase activity"/>
    <property type="evidence" value="ECO:0007669"/>
    <property type="project" value="UniProtKB-EC"/>
</dbReference>
<dbReference type="GO" id="GO:0005975">
    <property type="term" value="P:carbohydrate metabolic process"/>
    <property type="evidence" value="ECO:0007669"/>
    <property type="project" value="InterPro"/>
</dbReference>
<dbReference type="GO" id="GO:0006098">
    <property type="term" value="P:pentose-phosphate shunt"/>
    <property type="evidence" value="ECO:0007669"/>
    <property type="project" value="UniProtKB-UniPathway"/>
</dbReference>
<dbReference type="CDD" id="cd01400">
    <property type="entry name" value="6PGL"/>
    <property type="match status" value="1"/>
</dbReference>
<dbReference type="FunFam" id="3.40.50.1360:FF:000015">
    <property type="entry name" value="Hexose-6-phosphate dehydrogenase/glucose 1-dehydrogenase"/>
    <property type="match status" value="1"/>
</dbReference>
<dbReference type="Gene3D" id="3.40.50.1360">
    <property type="match status" value="1"/>
</dbReference>
<dbReference type="InterPro" id="IPR005900">
    <property type="entry name" value="6-phosphogluconolactonase_DevB"/>
</dbReference>
<dbReference type="InterPro" id="IPR006148">
    <property type="entry name" value="Glc/Gal-6P_isomerase"/>
</dbReference>
<dbReference type="InterPro" id="IPR037171">
    <property type="entry name" value="NagB/RpiA_transferase-like"/>
</dbReference>
<dbReference type="InterPro" id="IPR039104">
    <property type="entry name" value="PGLS"/>
</dbReference>
<dbReference type="NCBIfam" id="TIGR01198">
    <property type="entry name" value="pgl"/>
    <property type="match status" value="1"/>
</dbReference>
<dbReference type="PANTHER" id="PTHR11054">
    <property type="entry name" value="6-PHOSPHOGLUCONOLACTONASE"/>
    <property type="match status" value="1"/>
</dbReference>
<dbReference type="PANTHER" id="PTHR11054:SF0">
    <property type="entry name" value="6-PHOSPHOGLUCONOLACTONASE"/>
    <property type="match status" value="1"/>
</dbReference>
<dbReference type="Pfam" id="PF01182">
    <property type="entry name" value="Glucosamine_iso"/>
    <property type="match status" value="1"/>
</dbReference>
<dbReference type="SUPFAM" id="SSF100950">
    <property type="entry name" value="NagB/RpiA/CoA transferase-like"/>
    <property type="match status" value="1"/>
</dbReference>
<keyword id="KW-0378">Hydrolase</keyword>
<accession>P70715</accession>
<organism>
    <name type="scientific">Aggregatibacter actinomycetemcomitans</name>
    <name type="common">Actinobacillus actinomycetemcomitans</name>
    <name type="synonym">Haemophilus actinomycetemcomitans</name>
    <dbReference type="NCBI Taxonomy" id="714"/>
    <lineage>
        <taxon>Bacteria</taxon>
        <taxon>Pseudomonadati</taxon>
        <taxon>Pseudomonadota</taxon>
        <taxon>Gammaproteobacteria</taxon>
        <taxon>Pasteurellales</taxon>
        <taxon>Pasteurellaceae</taxon>
        <taxon>Aggregatibacter</taxon>
    </lineage>
</organism>
<reference key="1">
    <citation type="journal article" date="1997" name="Biochem. Biophys. Res. Commun.">
        <title>The gnd gene encoding a novel 6-phosphogluconate dehydrogenase and its adjacent region of Actinobacillus actinomycetemcomitans chromosomal DNA.</title>
        <authorList>
            <person name="Yoshida Y."/>
            <person name="Nakano Y."/>
            <person name="Yamashita Y."/>
            <person name="Koga T."/>
        </authorList>
    </citation>
    <scope>NUCLEOTIDE SEQUENCE [GENOMIC DNA]</scope>
    <source>
        <strain>ATCC 43718 / FDC Y4 / Serotype b</strain>
    </source>
</reference>
<protein>
    <recommendedName>
        <fullName>6-phosphogluconolactonase</fullName>
        <shortName>6PGL</shortName>
        <ecNumber>3.1.1.31</ecNumber>
    </recommendedName>
</protein>
<sequence length="232" mass="26224">MNYITFPTAQHAVEKIAQEFVIYSQLNHPAHISLSGGSTPKLLFKTLAQSPYAEQINWRNLHFWWGDDRMVSPSDPESNYGEVQKLLFDHIQIPAENIHRIRGENEPHFELKRFQAELSAVISDGVFDWIILGMGADGHTSSLFPHQTNFDDENLAVIAKHPESGQIRISKTAKLIEQAKRITYLVTGEGKAEILKEIQSTPAENLPYPAAKIYAKNGVTEWYLDKDAAKLL</sequence>
<name>6PGL_AGGAC</name>
<evidence type="ECO:0000305" key="1"/>
<comment type="function">
    <text>Hydrolysis of 6-phosphogluconolactone to 6-phosphogluconate.</text>
</comment>
<comment type="catalytic activity">
    <reaction>
        <text>6-phospho-D-glucono-1,5-lactone + H2O = 6-phospho-D-gluconate + H(+)</text>
        <dbReference type="Rhea" id="RHEA:12556"/>
        <dbReference type="ChEBI" id="CHEBI:15377"/>
        <dbReference type="ChEBI" id="CHEBI:15378"/>
        <dbReference type="ChEBI" id="CHEBI:57955"/>
        <dbReference type="ChEBI" id="CHEBI:58759"/>
        <dbReference type="EC" id="3.1.1.31"/>
    </reaction>
</comment>
<comment type="pathway">
    <text>Carbohydrate degradation; pentose phosphate pathway; D-ribulose 5-phosphate from D-glucose 6-phosphate (oxidative stage): step 2/3.</text>
</comment>
<comment type="similarity">
    <text evidence="1">Belongs to the glucosamine/galactosamine-6-phosphate isomerase family. 6-phosphogluconolactonase subfamily.</text>
</comment>
<comment type="sequence caution" evidence="1">
    <conflict type="erroneous initiation">
        <sequence resource="EMBL-CDS" id="BAA13555"/>
    </conflict>
</comment>